<organism>
    <name type="scientific">Pediococcus pentosaceus (strain ATCC 25745 / CCUG 21536 / LMG 10740 / 183-1w)</name>
    <dbReference type="NCBI Taxonomy" id="278197"/>
    <lineage>
        <taxon>Bacteria</taxon>
        <taxon>Bacillati</taxon>
        <taxon>Bacillota</taxon>
        <taxon>Bacilli</taxon>
        <taxon>Lactobacillales</taxon>
        <taxon>Lactobacillaceae</taxon>
        <taxon>Pediococcus</taxon>
    </lineage>
</organism>
<comment type="catalytic activity">
    <reaction>
        <text>an acyl phosphate + H2O = a carboxylate + phosphate + H(+)</text>
        <dbReference type="Rhea" id="RHEA:14965"/>
        <dbReference type="ChEBI" id="CHEBI:15377"/>
        <dbReference type="ChEBI" id="CHEBI:15378"/>
        <dbReference type="ChEBI" id="CHEBI:29067"/>
        <dbReference type="ChEBI" id="CHEBI:43474"/>
        <dbReference type="ChEBI" id="CHEBI:59918"/>
        <dbReference type="EC" id="3.6.1.7"/>
    </reaction>
</comment>
<comment type="similarity">
    <text evidence="2">Belongs to the acylphosphatase family.</text>
</comment>
<feature type="chain" id="PRO_0000326764" description="Acylphosphatase">
    <location>
        <begin position="1"/>
        <end position="90"/>
    </location>
</feature>
<feature type="domain" description="Acylphosphatase-like" evidence="1">
    <location>
        <begin position="3"/>
        <end position="90"/>
    </location>
</feature>
<feature type="active site" evidence="1">
    <location>
        <position position="18"/>
    </location>
</feature>
<feature type="active site" evidence="1">
    <location>
        <position position="36"/>
    </location>
</feature>
<protein>
    <recommendedName>
        <fullName>Acylphosphatase</fullName>
        <ecNumber>3.6.1.7</ecNumber>
    </recommendedName>
    <alternativeName>
        <fullName>Acylphosphate phosphohydrolase</fullName>
    </alternativeName>
</protein>
<dbReference type="EC" id="3.6.1.7"/>
<dbReference type="EMBL" id="CP000422">
    <property type="protein sequence ID" value="ABJ67778.1"/>
    <property type="molecule type" value="Genomic_DNA"/>
</dbReference>
<dbReference type="RefSeq" id="WP_002833816.1">
    <property type="nucleotide sequence ID" value="NC_008525.1"/>
</dbReference>
<dbReference type="SMR" id="Q03G94"/>
<dbReference type="STRING" id="278197.PEPE_0717"/>
<dbReference type="GeneID" id="33061536"/>
<dbReference type="KEGG" id="ppe:PEPE_0717"/>
<dbReference type="eggNOG" id="COG1254">
    <property type="taxonomic scope" value="Bacteria"/>
</dbReference>
<dbReference type="HOGENOM" id="CLU_141932_2_0_9"/>
<dbReference type="OrthoDB" id="9808093at2"/>
<dbReference type="Proteomes" id="UP000000773">
    <property type="component" value="Chromosome"/>
</dbReference>
<dbReference type="GO" id="GO:0003998">
    <property type="term" value="F:acylphosphatase activity"/>
    <property type="evidence" value="ECO:0007669"/>
    <property type="project" value="UniProtKB-EC"/>
</dbReference>
<dbReference type="Gene3D" id="3.30.70.100">
    <property type="match status" value="1"/>
</dbReference>
<dbReference type="InterPro" id="IPR020456">
    <property type="entry name" value="Acylphosphatase"/>
</dbReference>
<dbReference type="InterPro" id="IPR001792">
    <property type="entry name" value="Acylphosphatase-like_dom"/>
</dbReference>
<dbReference type="InterPro" id="IPR036046">
    <property type="entry name" value="Acylphosphatase-like_dom_sf"/>
</dbReference>
<dbReference type="PANTHER" id="PTHR47268">
    <property type="entry name" value="ACYLPHOSPHATASE"/>
    <property type="match status" value="1"/>
</dbReference>
<dbReference type="PANTHER" id="PTHR47268:SF4">
    <property type="entry name" value="ACYLPHOSPHATASE"/>
    <property type="match status" value="1"/>
</dbReference>
<dbReference type="Pfam" id="PF00708">
    <property type="entry name" value="Acylphosphatase"/>
    <property type="match status" value="1"/>
</dbReference>
<dbReference type="PRINTS" id="PR00112">
    <property type="entry name" value="ACYLPHPHTASE"/>
</dbReference>
<dbReference type="SUPFAM" id="SSF54975">
    <property type="entry name" value="Acylphosphatase/BLUF domain-like"/>
    <property type="match status" value="1"/>
</dbReference>
<dbReference type="PROSITE" id="PS51160">
    <property type="entry name" value="ACYLPHOSPHATASE_3"/>
    <property type="match status" value="1"/>
</dbReference>
<evidence type="ECO:0000255" key="1">
    <source>
        <dbReference type="PROSITE-ProRule" id="PRU00520"/>
    </source>
</evidence>
<evidence type="ECO:0000305" key="2"/>
<keyword id="KW-0378">Hydrolase</keyword>
<gene>
    <name type="primary">acyP</name>
    <name type="ordered locus">PEPE_0717</name>
</gene>
<reference key="1">
    <citation type="journal article" date="2006" name="Proc. Natl. Acad. Sci. U.S.A.">
        <title>Comparative genomics of the lactic acid bacteria.</title>
        <authorList>
            <person name="Makarova K.S."/>
            <person name="Slesarev A."/>
            <person name="Wolf Y.I."/>
            <person name="Sorokin A."/>
            <person name="Mirkin B."/>
            <person name="Koonin E.V."/>
            <person name="Pavlov A."/>
            <person name="Pavlova N."/>
            <person name="Karamychev V."/>
            <person name="Polouchine N."/>
            <person name="Shakhova V."/>
            <person name="Grigoriev I."/>
            <person name="Lou Y."/>
            <person name="Rohksar D."/>
            <person name="Lucas S."/>
            <person name="Huang K."/>
            <person name="Goodstein D.M."/>
            <person name="Hawkins T."/>
            <person name="Plengvidhya V."/>
            <person name="Welker D."/>
            <person name="Hughes J."/>
            <person name="Goh Y."/>
            <person name="Benson A."/>
            <person name="Baldwin K."/>
            <person name="Lee J.-H."/>
            <person name="Diaz-Muniz I."/>
            <person name="Dosti B."/>
            <person name="Smeianov V."/>
            <person name="Wechter W."/>
            <person name="Barabote R."/>
            <person name="Lorca G."/>
            <person name="Altermann E."/>
            <person name="Barrangou R."/>
            <person name="Ganesan B."/>
            <person name="Xie Y."/>
            <person name="Rawsthorne H."/>
            <person name="Tamir D."/>
            <person name="Parker C."/>
            <person name="Breidt F."/>
            <person name="Broadbent J.R."/>
            <person name="Hutkins R."/>
            <person name="O'Sullivan D."/>
            <person name="Steele J."/>
            <person name="Unlu G."/>
            <person name="Saier M.H. Jr."/>
            <person name="Klaenhammer T."/>
            <person name="Richardson P."/>
            <person name="Kozyavkin S."/>
            <person name="Weimer B.C."/>
            <person name="Mills D.A."/>
        </authorList>
    </citation>
    <scope>NUCLEOTIDE SEQUENCE [LARGE SCALE GENOMIC DNA]</scope>
    <source>
        <strain>ATCC 25745 / CCUG 21536 / LMG 10740 / 183-1w</strain>
    </source>
</reference>
<name>ACYP_PEDPA</name>
<accession>Q03G94</accession>
<sequence>MKAVHMNASGQVQAVGFRYTTKLLADRLKVTGWVKNNPDGTVEIEAQAPDAVLDQFIDGVKASPSPSGRVNKLTVKSIPLFEGQDFIVKY</sequence>
<proteinExistence type="inferred from homology"/>